<sequence>MEQHFEHLSCIPYLENTEASRYQTLDIWIPTRHQHGDSTHGYWIIFIHGGAWRDPDINATNFAEKAVLDLITSGVSQIIEGIASINYRLSPRTPSQPVPSGGHVGGEQQAMHPDHLNDVISGIEYLQRKFRFGNRYILTGHSCGATLAYQTLIRQTMDKTETHAAPHAIIGVAGLYDLPLLRDMDPMPPMCHQFLLAAFGSDETLWRDVSPATYGDFERLWPTGKLAVLVYCEDDEYVSPAQLNTMYHALEIWGEKEGRLVKTLKLPGGHDEVWRTGSGLASCVEKSINYLQDLSVSEA</sequence>
<proteinExistence type="inferred from homology"/>
<feature type="chain" id="PRO_0000461416" description="Kynurenine formamidase-like hydrolase fscH">
    <location>
        <begin position="1"/>
        <end position="299"/>
    </location>
</feature>
<feature type="region of interest" description="Disordered" evidence="2">
    <location>
        <begin position="90"/>
        <end position="110"/>
    </location>
</feature>
<feature type="short sequence motif" description="HGGXW" evidence="1">
    <location>
        <begin position="48"/>
        <end position="52"/>
    </location>
</feature>
<feature type="active site" description="Nucleophile" evidence="1">
    <location>
        <position position="142"/>
    </location>
</feature>
<dbReference type="EC" id="3.5.1.-" evidence="6"/>
<dbReference type="EMBL" id="BK013344">
    <property type="protein sequence ID" value="DAD54581.1"/>
    <property type="molecule type" value="Genomic_DNA"/>
</dbReference>
<dbReference type="SMR" id="A0A823A413"/>
<dbReference type="GO" id="GO:0016787">
    <property type="term" value="F:hydrolase activity"/>
    <property type="evidence" value="ECO:0007669"/>
    <property type="project" value="UniProtKB-KW"/>
</dbReference>
<dbReference type="Gene3D" id="3.40.50.1820">
    <property type="entry name" value="alpha/beta hydrolase"/>
    <property type="match status" value="1"/>
</dbReference>
<dbReference type="InterPro" id="IPR029058">
    <property type="entry name" value="AB_hydrolase_fold"/>
</dbReference>
<dbReference type="InterPro" id="IPR050300">
    <property type="entry name" value="GDXG_lipolytic_enzyme"/>
</dbReference>
<dbReference type="PANTHER" id="PTHR48081">
    <property type="entry name" value="AB HYDROLASE SUPERFAMILY PROTEIN C4A8.06C"/>
    <property type="match status" value="1"/>
</dbReference>
<dbReference type="PANTHER" id="PTHR48081:SF33">
    <property type="entry name" value="KYNURENINE FORMAMIDASE"/>
    <property type="match status" value="1"/>
</dbReference>
<dbReference type="SUPFAM" id="SSF53474">
    <property type="entry name" value="alpha/beta-Hydrolases"/>
    <property type="match status" value="1"/>
</dbReference>
<protein>
    <recommendedName>
        <fullName evidence="4">Kynurenine formamidase-like hydrolase fscH</fullName>
        <ecNumber evidence="6">3.5.1.-</ecNumber>
    </recommendedName>
    <alternativeName>
        <fullName evidence="4">Fusarochromene biosynthesis cluster protein D</fullName>
    </alternativeName>
</protein>
<name>FSCH_FUSEQ</name>
<keyword id="KW-0378">Hydrolase</keyword>
<evidence type="ECO:0000250" key="1">
    <source>
        <dbReference type="UniProtKB" id="Q04066"/>
    </source>
</evidence>
<evidence type="ECO:0000256" key="2">
    <source>
        <dbReference type="SAM" id="MobiDB-lite"/>
    </source>
</evidence>
<evidence type="ECO:0000269" key="3">
    <source>
    </source>
</evidence>
<evidence type="ECO:0000303" key="4">
    <source>
    </source>
</evidence>
<evidence type="ECO:0000305" key="5"/>
<evidence type="ECO:0000305" key="6">
    <source>
    </source>
</evidence>
<comment type="function">
    <text evidence="3 6">Kynurenine formamidase-like hydrolase; part of the fragmented gene cluster that mediates the biosynthesis of fusarochromene, a tryptophan-derived metabolite closely related to a group of mycotoxins including fusarochromanone (PubMed:33107888). Within the pathway, fscH converts the product of fscD into 4-hydroxykyrunenine (Probable). The first step of the pathway is the epimerization of L-tryptophan to D-tryptophan in the presence of the NRPS-like tryptophan epimerase fscC. D-tryptophan is subsequently hydroxylated by the tryptophan 6-hydroxylase fscE to yield 6-hydroxytryptophan. The pyrrole ring undergoes cleavaged by the tryptophan 2,3-dioxygenase fscD and is finally converted to 4-hydroxykyrunenine by the hydrolase fscH. The NRPS-like oxidoreductase fscA reduces the carboxyl group to primary alcohol and the DMATS-type prenyltransferase fscG performs prenylation, followed by the formation of a chromene ring catalyzed by the oxidoreductase fscI, which leads to desacetylfusarochromene. Epoxidation by fscF and rearrangement reactions of chromene double bonds convert compound desacetylfusarochromene to fusarochromanones. Although specific acetyltransferases were not found near the fsc gene cluster, several predicted enzymes containing the N-acetyltransferase superfamily domain are present in the genome of F.equiseti. These predicted enzymes may have the potential to convert desacetylfusarochromene to fusarochromene (Probable).</text>
</comment>
<comment type="pathway">
    <text evidence="6">Secondary metabolite biosynthesis.</text>
</comment>
<comment type="domain">
    <text evidence="1">The main chain amide nitrogen atoms of the second glycine and its adjacent residue in the HGGXW motif define the oxyanion hole, and stabilize the oxyanion that forms during the nucleophilic attack by the catalytic serine during substrate cleavage.</text>
</comment>
<comment type="similarity">
    <text evidence="5">Belongs to the kynurenine formamidase family.</text>
</comment>
<accession>A0A823A413</accession>
<gene>
    <name evidence="4" type="primary">fscH</name>
</gene>
<reference key="1">
    <citation type="journal article" date="2021" name="Org. Biomol. Chem.">
        <title>Fusarochromene, a novel tryptophan-derived metabolite from Fusarium sacchari.</title>
        <authorList>
            <person name="Marshall J.W."/>
            <person name="de Mattos-Shipley K.M.J."/>
            <person name="Ghannam I.A.Y."/>
            <person name="Munawar A."/>
            <person name="Killen J.C."/>
            <person name="Lazarus C.M."/>
            <person name="Cox R.J."/>
            <person name="Willis C.L."/>
            <person name="Simpson T.J."/>
        </authorList>
    </citation>
    <scope>NUCLEOTIDE SEQUENCE [GENOMIC DNA]</scope>
    <scope>FUNCTION</scope>
    <scope>PATHWAY</scope>
</reference>
<organism>
    <name type="scientific">Fusarium equiseti</name>
    <name type="common">Fusarium scirpi</name>
    <dbReference type="NCBI Taxonomy" id="61235"/>
    <lineage>
        <taxon>Eukaryota</taxon>
        <taxon>Fungi</taxon>
        <taxon>Dikarya</taxon>
        <taxon>Ascomycota</taxon>
        <taxon>Pezizomycotina</taxon>
        <taxon>Sordariomycetes</taxon>
        <taxon>Hypocreomycetidae</taxon>
        <taxon>Hypocreales</taxon>
        <taxon>Nectriaceae</taxon>
        <taxon>Fusarium</taxon>
        <taxon>Fusarium incarnatum-equiseti species complex</taxon>
    </lineage>
</organism>